<keyword id="KW-0285">Flavoprotein</keyword>
<keyword id="KW-0288">FMN</keyword>
<keyword id="KW-0503">Monooxygenase</keyword>
<keyword id="KW-0521">NADP</keyword>
<keyword id="KW-0560">Oxidoreductase</keyword>
<comment type="function">
    <text evidence="1">Catalyzes the pyrimidine ring opening between N-3 and C-4 by an unusual flavin hydroperoxide-catalyzed mechanism, adding oxygen atoms in the process to yield ureidoacrylate peracid, that immediately reacts with FMN forming ureidoacrylate and FMN-N(5)-oxide. The FMN-N(5)-oxide reacts spontaneously with NADH to produce FMN. Requires the flavin reductase RutF to regenerate FMN in vivo.</text>
</comment>
<comment type="catalytic activity">
    <reaction evidence="1">
        <text>uracil + FMNH2 + NADH + O2 = (Z)-3-ureidoacrylate + FMN + NAD(+) + H2O + H(+)</text>
        <dbReference type="Rhea" id="RHEA:31587"/>
        <dbReference type="ChEBI" id="CHEBI:15377"/>
        <dbReference type="ChEBI" id="CHEBI:15378"/>
        <dbReference type="ChEBI" id="CHEBI:15379"/>
        <dbReference type="ChEBI" id="CHEBI:17568"/>
        <dbReference type="ChEBI" id="CHEBI:57540"/>
        <dbReference type="ChEBI" id="CHEBI:57618"/>
        <dbReference type="ChEBI" id="CHEBI:57945"/>
        <dbReference type="ChEBI" id="CHEBI:58210"/>
        <dbReference type="ChEBI" id="CHEBI:59891"/>
        <dbReference type="EC" id="1.14.99.46"/>
    </reaction>
</comment>
<comment type="catalytic activity">
    <reaction evidence="1">
        <text>thymine + FMNH2 + NADH + O2 = (Z)-2-methylureidoacrylate + FMN + NAD(+) + H2O + H(+)</text>
        <dbReference type="Rhea" id="RHEA:31599"/>
        <dbReference type="ChEBI" id="CHEBI:15377"/>
        <dbReference type="ChEBI" id="CHEBI:15378"/>
        <dbReference type="ChEBI" id="CHEBI:15379"/>
        <dbReference type="ChEBI" id="CHEBI:17821"/>
        <dbReference type="ChEBI" id="CHEBI:57540"/>
        <dbReference type="ChEBI" id="CHEBI:57618"/>
        <dbReference type="ChEBI" id="CHEBI:57945"/>
        <dbReference type="ChEBI" id="CHEBI:58210"/>
        <dbReference type="ChEBI" id="CHEBI:143783"/>
        <dbReference type="EC" id="1.14.99.46"/>
    </reaction>
</comment>
<comment type="induction">
    <text evidence="1">Up-regulated by the nitrogen regulatory protein C (NtrC also called GlnG) and repressed by RutR.</text>
</comment>
<comment type="similarity">
    <text evidence="1">Belongs to the NtaA/SnaA/DszA monooxygenase family. RutA subfamily.</text>
</comment>
<proteinExistence type="inferred from homology"/>
<reference key="1">
    <citation type="submission" date="2008-02" db="EMBL/GenBank/DDBJ databases">
        <title>Complete sequence of Escherichia coli C str. ATCC 8739.</title>
        <authorList>
            <person name="Copeland A."/>
            <person name="Lucas S."/>
            <person name="Lapidus A."/>
            <person name="Glavina del Rio T."/>
            <person name="Dalin E."/>
            <person name="Tice H."/>
            <person name="Bruce D."/>
            <person name="Goodwin L."/>
            <person name="Pitluck S."/>
            <person name="Kiss H."/>
            <person name="Brettin T."/>
            <person name="Detter J.C."/>
            <person name="Han C."/>
            <person name="Kuske C.R."/>
            <person name="Schmutz J."/>
            <person name="Larimer F."/>
            <person name="Land M."/>
            <person name="Hauser L."/>
            <person name="Kyrpides N."/>
            <person name="Mikhailova N."/>
            <person name="Ingram L."/>
            <person name="Richardson P."/>
        </authorList>
    </citation>
    <scope>NUCLEOTIDE SEQUENCE [LARGE SCALE GENOMIC DNA]</scope>
    <source>
        <strain>ATCC 8739 / DSM 1576 / NBRC 3972 / NCIMB 8545 / WDCM 00012 / Crooks</strain>
    </source>
</reference>
<name>RUTA_ECOLC</name>
<accession>B1IV85</accession>
<dbReference type="EC" id="1.14.99.46" evidence="1"/>
<dbReference type="EMBL" id="CP000946">
    <property type="protein sequence ID" value="ACA78214.1"/>
    <property type="molecule type" value="Genomic_DNA"/>
</dbReference>
<dbReference type="RefSeq" id="WP_001301233.1">
    <property type="nucleotide sequence ID" value="NZ_MTFT01000050.1"/>
</dbReference>
<dbReference type="SMR" id="B1IV85"/>
<dbReference type="KEGG" id="ecl:EcolC_2583"/>
<dbReference type="HOGENOM" id="CLU_027853_1_1_6"/>
<dbReference type="GO" id="GO:0008726">
    <property type="term" value="F:alkanesulfonate monooxygenase activity"/>
    <property type="evidence" value="ECO:0007669"/>
    <property type="project" value="TreeGrafter"/>
</dbReference>
<dbReference type="GO" id="GO:0052614">
    <property type="term" value="F:uracil oxygenase activity"/>
    <property type="evidence" value="ECO:0007669"/>
    <property type="project" value="UniProtKB-EC"/>
</dbReference>
<dbReference type="GO" id="GO:0046306">
    <property type="term" value="P:alkanesulfonate catabolic process"/>
    <property type="evidence" value="ECO:0007669"/>
    <property type="project" value="TreeGrafter"/>
</dbReference>
<dbReference type="GO" id="GO:0019740">
    <property type="term" value="P:nitrogen utilization"/>
    <property type="evidence" value="ECO:0007669"/>
    <property type="project" value="UniProtKB-UniRule"/>
</dbReference>
<dbReference type="GO" id="GO:0006212">
    <property type="term" value="P:uracil catabolic process"/>
    <property type="evidence" value="ECO:0007669"/>
    <property type="project" value="UniProtKB-UniRule"/>
</dbReference>
<dbReference type="CDD" id="cd01094">
    <property type="entry name" value="Alkanesulfonate_monoxygenase"/>
    <property type="match status" value="1"/>
</dbReference>
<dbReference type="FunFam" id="3.20.20.30:FF:000003">
    <property type="entry name" value="Pyrimidine monooxygenase RutA"/>
    <property type="match status" value="1"/>
</dbReference>
<dbReference type="Gene3D" id="3.20.20.30">
    <property type="entry name" value="Luciferase-like domain"/>
    <property type="match status" value="1"/>
</dbReference>
<dbReference type="HAMAP" id="MF_01699">
    <property type="entry name" value="RutA"/>
    <property type="match status" value="1"/>
</dbReference>
<dbReference type="InterPro" id="IPR011251">
    <property type="entry name" value="Luciferase-like_dom"/>
</dbReference>
<dbReference type="InterPro" id="IPR036661">
    <property type="entry name" value="Luciferase-like_sf"/>
</dbReference>
<dbReference type="InterPro" id="IPR019914">
    <property type="entry name" value="Pyrimidine_monooxygenase_RutA"/>
</dbReference>
<dbReference type="InterPro" id="IPR050172">
    <property type="entry name" value="SsuD_RutA_monooxygenase"/>
</dbReference>
<dbReference type="NCBIfam" id="TIGR03612">
    <property type="entry name" value="RutA"/>
    <property type="match status" value="1"/>
</dbReference>
<dbReference type="PANTHER" id="PTHR42847">
    <property type="entry name" value="ALKANESULFONATE MONOOXYGENASE"/>
    <property type="match status" value="1"/>
</dbReference>
<dbReference type="PANTHER" id="PTHR42847:SF4">
    <property type="entry name" value="ALKANESULFONATE MONOOXYGENASE-RELATED"/>
    <property type="match status" value="1"/>
</dbReference>
<dbReference type="Pfam" id="PF00296">
    <property type="entry name" value="Bac_luciferase"/>
    <property type="match status" value="1"/>
</dbReference>
<dbReference type="SUPFAM" id="SSF51679">
    <property type="entry name" value="Bacterial luciferase-like"/>
    <property type="match status" value="1"/>
</dbReference>
<protein>
    <recommendedName>
        <fullName evidence="1">Pyrimidine monooxygenase RutA</fullName>
        <ecNumber evidence="1">1.14.99.46</ecNumber>
    </recommendedName>
</protein>
<feature type="chain" id="PRO_0000402595" description="Pyrimidine monooxygenase RutA">
    <location>
        <begin position="1"/>
        <end position="363"/>
    </location>
</feature>
<feature type="binding site" evidence="1">
    <location>
        <begin position="49"/>
        <end position="50"/>
    </location>
    <ligand>
        <name>FMN</name>
        <dbReference type="ChEBI" id="CHEBI:58210"/>
    </ligand>
</feature>
<feature type="binding site" evidence="1">
    <location>
        <position position="115"/>
    </location>
    <ligand>
        <name>FMN</name>
        <dbReference type="ChEBI" id="CHEBI:58210"/>
    </ligand>
</feature>
<feature type="binding site" evidence="1">
    <location>
        <position position="124"/>
    </location>
    <ligand>
        <name>FMN</name>
        <dbReference type="ChEBI" id="CHEBI:58210"/>
    </ligand>
</feature>
<feature type="binding site" evidence="1">
    <location>
        <begin position="140"/>
        <end position="141"/>
    </location>
    <ligand>
        <name>FMN</name>
        <dbReference type="ChEBI" id="CHEBI:58210"/>
    </ligand>
</feature>
<feature type="binding site" evidence="1">
    <location>
        <position position="190"/>
    </location>
    <ligand>
        <name>FMN</name>
        <dbReference type="ChEBI" id="CHEBI:58210"/>
    </ligand>
</feature>
<organism>
    <name type="scientific">Escherichia coli (strain ATCC 8739 / DSM 1576 / NBRC 3972 / NCIMB 8545 / WDCM 00012 / Crooks)</name>
    <dbReference type="NCBI Taxonomy" id="481805"/>
    <lineage>
        <taxon>Bacteria</taxon>
        <taxon>Pseudomonadati</taxon>
        <taxon>Pseudomonadota</taxon>
        <taxon>Gammaproteobacteria</taxon>
        <taxon>Enterobacterales</taxon>
        <taxon>Enterobacteriaceae</taxon>
        <taxon>Escherichia</taxon>
    </lineage>
</organism>
<gene>
    <name evidence="1" type="primary">rutA</name>
    <name type="ordered locus">EcolC_2583</name>
</gene>
<evidence type="ECO:0000255" key="1">
    <source>
        <dbReference type="HAMAP-Rule" id="MF_01699"/>
    </source>
</evidence>
<sequence length="363" mass="39943">MKIGVFVPIGNNGWLISTHAPQYMPTFELNKAIVQKAEHYHFDFALSMIKLRGFGGKTEFWDHNLESFTLMAGLAAVTSRIQIYATAATLTLPPAIVARMAATIDSISGGRFGVNLVTGWQKPEYEQMGIWPGDDYFSRRYDYLTEYVQVLRDLWGTGKSDFKGDFFTMNDCRVSPQPSVPMKVICAGQSDAGMAFSAQYADFNFCFGKGVNTPTAFAPTAARMKQAAEQTGRDVGSYVLFMVIADETDDAARAKWEHYKAGADEEALSWLTEQSQKDTRSGTDTNVRQMADPTSAVNINMGTLVGSYASVARMLDEVASVPGAEGVLLTFDDFLSGIETFGERIQPLMQCRAHLPVLTQEVA</sequence>